<protein>
    <recommendedName>
        <fullName evidence="1">Putative pyruvate, phosphate dikinase regulatory protein 1</fullName>
        <shortName evidence="1">PPDK regulatory protein 1</shortName>
        <ecNumber evidence="1">2.7.11.32</ecNumber>
        <ecNumber evidence="1">2.7.4.27</ecNumber>
    </recommendedName>
</protein>
<comment type="function">
    <text evidence="1">Bifunctional serine/threonine kinase and phosphorylase involved in the regulation of the pyruvate, phosphate dikinase (PPDK) by catalyzing its phosphorylation/dephosphorylation.</text>
</comment>
<comment type="catalytic activity">
    <reaction evidence="1">
        <text>N(tele)-phospho-L-histidyl/L-threonyl-[pyruvate, phosphate dikinase] + ADP = N(tele)-phospho-L-histidyl/O-phospho-L-threonyl-[pyruvate, phosphate dikinase] + AMP + H(+)</text>
        <dbReference type="Rhea" id="RHEA:43692"/>
        <dbReference type="Rhea" id="RHEA-COMP:10650"/>
        <dbReference type="Rhea" id="RHEA-COMP:10651"/>
        <dbReference type="ChEBI" id="CHEBI:15378"/>
        <dbReference type="ChEBI" id="CHEBI:30013"/>
        <dbReference type="ChEBI" id="CHEBI:61977"/>
        <dbReference type="ChEBI" id="CHEBI:83586"/>
        <dbReference type="ChEBI" id="CHEBI:456215"/>
        <dbReference type="ChEBI" id="CHEBI:456216"/>
        <dbReference type="EC" id="2.7.11.32"/>
    </reaction>
</comment>
<comment type="catalytic activity">
    <reaction evidence="1">
        <text>N(tele)-phospho-L-histidyl/O-phospho-L-threonyl-[pyruvate, phosphate dikinase] + phosphate + H(+) = N(tele)-phospho-L-histidyl/L-threonyl-[pyruvate, phosphate dikinase] + diphosphate</text>
        <dbReference type="Rhea" id="RHEA:43696"/>
        <dbReference type="Rhea" id="RHEA-COMP:10650"/>
        <dbReference type="Rhea" id="RHEA-COMP:10651"/>
        <dbReference type="ChEBI" id="CHEBI:15378"/>
        <dbReference type="ChEBI" id="CHEBI:30013"/>
        <dbReference type="ChEBI" id="CHEBI:33019"/>
        <dbReference type="ChEBI" id="CHEBI:43474"/>
        <dbReference type="ChEBI" id="CHEBI:61977"/>
        <dbReference type="ChEBI" id="CHEBI:83586"/>
        <dbReference type="EC" id="2.7.4.27"/>
    </reaction>
</comment>
<comment type="similarity">
    <text evidence="1">Belongs to the pyruvate, phosphate/water dikinase regulatory protein family. PDRP subfamily.</text>
</comment>
<accession>Q5HNY5</accession>
<evidence type="ECO:0000255" key="1">
    <source>
        <dbReference type="HAMAP-Rule" id="MF_00921"/>
    </source>
</evidence>
<dbReference type="EC" id="2.7.11.32" evidence="1"/>
<dbReference type="EC" id="2.7.4.27" evidence="1"/>
<dbReference type="EMBL" id="CP000029">
    <property type="protein sequence ID" value="AAW54550.1"/>
    <property type="molecule type" value="Genomic_DNA"/>
</dbReference>
<dbReference type="RefSeq" id="WP_001831146.1">
    <property type="nucleotide sequence ID" value="NC_002976.3"/>
</dbReference>
<dbReference type="SMR" id="Q5HNY5"/>
<dbReference type="STRING" id="176279.SERP1129"/>
<dbReference type="KEGG" id="ser:SERP1129"/>
<dbReference type="eggNOG" id="COG1806">
    <property type="taxonomic scope" value="Bacteria"/>
</dbReference>
<dbReference type="HOGENOM" id="CLU_046206_2_1_9"/>
<dbReference type="Proteomes" id="UP000000531">
    <property type="component" value="Chromosome"/>
</dbReference>
<dbReference type="GO" id="GO:0043531">
    <property type="term" value="F:ADP binding"/>
    <property type="evidence" value="ECO:0007669"/>
    <property type="project" value="UniProtKB-UniRule"/>
</dbReference>
<dbReference type="GO" id="GO:0005524">
    <property type="term" value="F:ATP binding"/>
    <property type="evidence" value="ECO:0007669"/>
    <property type="project" value="InterPro"/>
</dbReference>
<dbReference type="GO" id="GO:0016776">
    <property type="term" value="F:phosphotransferase activity, phosphate group as acceptor"/>
    <property type="evidence" value="ECO:0007669"/>
    <property type="project" value="UniProtKB-UniRule"/>
</dbReference>
<dbReference type="GO" id="GO:0004674">
    <property type="term" value="F:protein serine/threonine kinase activity"/>
    <property type="evidence" value="ECO:0007669"/>
    <property type="project" value="UniProtKB-UniRule"/>
</dbReference>
<dbReference type="HAMAP" id="MF_00921">
    <property type="entry name" value="PDRP"/>
    <property type="match status" value="1"/>
</dbReference>
<dbReference type="InterPro" id="IPR005177">
    <property type="entry name" value="Kinase-pyrophosphorylase"/>
</dbReference>
<dbReference type="InterPro" id="IPR026565">
    <property type="entry name" value="PPDK_reg"/>
</dbReference>
<dbReference type="NCBIfam" id="NF003742">
    <property type="entry name" value="PRK05339.1"/>
    <property type="match status" value="1"/>
</dbReference>
<dbReference type="PANTHER" id="PTHR31756">
    <property type="entry name" value="PYRUVATE, PHOSPHATE DIKINASE REGULATORY PROTEIN 1, CHLOROPLASTIC"/>
    <property type="match status" value="1"/>
</dbReference>
<dbReference type="PANTHER" id="PTHR31756:SF3">
    <property type="entry name" value="PYRUVATE, PHOSPHATE DIKINASE REGULATORY PROTEIN 1, CHLOROPLASTIC"/>
    <property type="match status" value="1"/>
</dbReference>
<dbReference type="Pfam" id="PF03618">
    <property type="entry name" value="Kinase-PPPase"/>
    <property type="match status" value="1"/>
</dbReference>
<name>PDRP1_STAEQ</name>
<proteinExistence type="inferred from homology"/>
<sequence length="272" mass="30820">MDNIKIIVASDSIGETAELVARAGVSQFNPKQCKHEFLRYPYIESFENVDEVIQVAKDTNAIIVYTLIKPEIKKYMISKVNEHALKSVDIMGPLMELLSNSIEETPYYEPGMVHRLDDAYFKKIDAIEFAVKYDDGKDPKGLPKADIVLLGISRTSKTPLSQYLAHKSYKVMNIPIVPEVTPPDGLFNVDPSKCIALKISEEKLNRIRKERLKQLGLGDKARYATEARIQEELDYFEKLVDKIGCPVIDVSDKAIEETANDIIHFIEQNKSK</sequence>
<organism>
    <name type="scientific">Staphylococcus epidermidis (strain ATCC 35984 / DSM 28319 / BCRC 17069 / CCUG 31568 / BM 3577 / RP62A)</name>
    <dbReference type="NCBI Taxonomy" id="176279"/>
    <lineage>
        <taxon>Bacteria</taxon>
        <taxon>Bacillati</taxon>
        <taxon>Bacillota</taxon>
        <taxon>Bacilli</taxon>
        <taxon>Bacillales</taxon>
        <taxon>Staphylococcaceae</taxon>
        <taxon>Staphylococcus</taxon>
    </lineage>
</organism>
<reference key="1">
    <citation type="journal article" date="2005" name="J. Bacteriol.">
        <title>Insights on evolution of virulence and resistance from the complete genome analysis of an early methicillin-resistant Staphylococcus aureus strain and a biofilm-producing methicillin-resistant Staphylococcus epidermidis strain.</title>
        <authorList>
            <person name="Gill S.R."/>
            <person name="Fouts D.E."/>
            <person name="Archer G.L."/>
            <person name="Mongodin E.F."/>
            <person name="DeBoy R.T."/>
            <person name="Ravel J."/>
            <person name="Paulsen I.T."/>
            <person name="Kolonay J.F."/>
            <person name="Brinkac L.M."/>
            <person name="Beanan M.J."/>
            <person name="Dodson R.J."/>
            <person name="Daugherty S.C."/>
            <person name="Madupu R."/>
            <person name="Angiuoli S.V."/>
            <person name="Durkin A.S."/>
            <person name="Haft D.H."/>
            <person name="Vamathevan J.J."/>
            <person name="Khouri H."/>
            <person name="Utterback T.R."/>
            <person name="Lee C."/>
            <person name="Dimitrov G."/>
            <person name="Jiang L."/>
            <person name="Qin H."/>
            <person name="Weidman J."/>
            <person name="Tran K."/>
            <person name="Kang K.H."/>
            <person name="Hance I.R."/>
            <person name="Nelson K.E."/>
            <person name="Fraser C.M."/>
        </authorList>
    </citation>
    <scope>NUCLEOTIDE SEQUENCE [LARGE SCALE GENOMIC DNA]</scope>
    <source>
        <strain>ATCC 35984 / DSM 28319 / BCRC 17069 / CCUG 31568 / BM 3577 / RP62A</strain>
    </source>
</reference>
<feature type="chain" id="PRO_0000196723" description="Putative pyruvate, phosphate dikinase regulatory protein 1">
    <location>
        <begin position="1"/>
        <end position="272"/>
    </location>
</feature>
<feature type="binding site" evidence="1">
    <location>
        <begin position="151"/>
        <end position="158"/>
    </location>
    <ligand>
        <name>ADP</name>
        <dbReference type="ChEBI" id="CHEBI:456216"/>
    </ligand>
</feature>
<gene>
    <name type="ordered locus">SERP1129</name>
</gene>
<keyword id="KW-0418">Kinase</keyword>
<keyword id="KW-0547">Nucleotide-binding</keyword>
<keyword id="KW-1185">Reference proteome</keyword>
<keyword id="KW-0723">Serine/threonine-protein kinase</keyword>
<keyword id="KW-0808">Transferase</keyword>